<organism>
    <name type="scientific">Bacillus thuringiensis subsp. konkukian (strain 97-27)</name>
    <dbReference type="NCBI Taxonomy" id="281309"/>
    <lineage>
        <taxon>Bacteria</taxon>
        <taxon>Bacillati</taxon>
        <taxon>Bacillota</taxon>
        <taxon>Bacilli</taxon>
        <taxon>Bacillales</taxon>
        <taxon>Bacillaceae</taxon>
        <taxon>Bacillus</taxon>
        <taxon>Bacillus cereus group</taxon>
    </lineage>
</organism>
<proteinExistence type="inferred from homology"/>
<dbReference type="EMBL" id="AE017355">
    <property type="protein sequence ID" value="AAT62354.1"/>
    <property type="molecule type" value="Genomic_DNA"/>
</dbReference>
<dbReference type="RefSeq" id="YP_034817.1">
    <property type="nucleotide sequence ID" value="NC_005957.1"/>
</dbReference>
<dbReference type="SMR" id="Q6HNQ4"/>
<dbReference type="KEGG" id="btk:BT9727_0469"/>
<dbReference type="PATRIC" id="fig|281309.8.peg.499"/>
<dbReference type="HOGENOM" id="CLU_000445_107_19_9"/>
<dbReference type="Proteomes" id="UP000001301">
    <property type="component" value="Chromosome"/>
</dbReference>
<dbReference type="GO" id="GO:0005886">
    <property type="term" value="C:plasma membrane"/>
    <property type="evidence" value="ECO:0007669"/>
    <property type="project" value="UniProtKB-SubCell"/>
</dbReference>
<dbReference type="GO" id="GO:0006935">
    <property type="term" value="P:chemotaxis"/>
    <property type="evidence" value="ECO:0007669"/>
    <property type="project" value="UniProtKB-KW"/>
</dbReference>
<dbReference type="GO" id="GO:0007165">
    <property type="term" value="P:signal transduction"/>
    <property type="evidence" value="ECO:0007669"/>
    <property type="project" value="UniProtKB-KW"/>
</dbReference>
<dbReference type="CDD" id="cd06225">
    <property type="entry name" value="HAMP"/>
    <property type="match status" value="1"/>
</dbReference>
<dbReference type="CDD" id="cd11386">
    <property type="entry name" value="MCP_signal"/>
    <property type="match status" value="1"/>
</dbReference>
<dbReference type="CDD" id="cd18773">
    <property type="entry name" value="PDC1_HK_sensor"/>
    <property type="match status" value="1"/>
</dbReference>
<dbReference type="CDD" id="cd12912">
    <property type="entry name" value="PDC2_MCP_like"/>
    <property type="match status" value="1"/>
</dbReference>
<dbReference type="FunFam" id="1.10.287.950:FF:000003">
    <property type="entry name" value="Methyl-accepting chemotaxis protein"/>
    <property type="match status" value="1"/>
</dbReference>
<dbReference type="FunFam" id="1.10.8.500:FF:000002">
    <property type="entry name" value="Methyl-accepting chemotaxis protein"/>
    <property type="match status" value="1"/>
</dbReference>
<dbReference type="FunFam" id="3.30.450.20:FF:000048">
    <property type="entry name" value="Methyl-accepting chemotaxis protein"/>
    <property type="match status" value="1"/>
</dbReference>
<dbReference type="Gene3D" id="1.10.8.500">
    <property type="entry name" value="HAMP domain in histidine kinase"/>
    <property type="match status" value="1"/>
</dbReference>
<dbReference type="Gene3D" id="1.10.287.950">
    <property type="entry name" value="Methyl-accepting chemotaxis protein"/>
    <property type="match status" value="1"/>
</dbReference>
<dbReference type="Gene3D" id="3.30.450.20">
    <property type="entry name" value="PAS domain"/>
    <property type="match status" value="2"/>
</dbReference>
<dbReference type="InterPro" id="IPR033479">
    <property type="entry name" value="dCache_1"/>
</dbReference>
<dbReference type="InterPro" id="IPR003660">
    <property type="entry name" value="HAMP_dom"/>
</dbReference>
<dbReference type="InterPro" id="IPR004089">
    <property type="entry name" value="MCPsignal_dom"/>
</dbReference>
<dbReference type="InterPro" id="IPR029151">
    <property type="entry name" value="Sensor-like_sf"/>
</dbReference>
<dbReference type="PANTHER" id="PTHR32089">
    <property type="entry name" value="METHYL-ACCEPTING CHEMOTAXIS PROTEIN MCPB"/>
    <property type="match status" value="1"/>
</dbReference>
<dbReference type="PANTHER" id="PTHR32089:SF114">
    <property type="entry name" value="METHYL-ACCEPTING CHEMOTAXIS PROTEIN MCPB"/>
    <property type="match status" value="1"/>
</dbReference>
<dbReference type="Pfam" id="PF02743">
    <property type="entry name" value="dCache_1"/>
    <property type="match status" value="1"/>
</dbReference>
<dbReference type="Pfam" id="PF00672">
    <property type="entry name" value="HAMP"/>
    <property type="match status" value="1"/>
</dbReference>
<dbReference type="Pfam" id="PF00015">
    <property type="entry name" value="MCPsignal"/>
    <property type="match status" value="1"/>
</dbReference>
<dbReference type="SMART" id="SM00304">
    <property type="entry name" value="HAMP"/>
    <property type="match status" value="2"/>
</dbReference>
<dbReference type="SMART" id="SM00283">
    <property type="entry name" value="MA"/>
    <property type="match status" value="1"/>
</dbReference>
<dbReference type="SUPFAM" id="SSF58104">
    <property type="entry name" value="Methyl-accepting chemotaxis protein (MCP) signaling domain"/>
    <property type="match status" value="1"/>
</dbReference>
<dbReference type="SUPFAM" id="SSF103190">
    <property type="entry name" value="Sensory domain-like"/>
    <property type="match status" value="1"/>
</dbReference>
<dbReference type="PROSITE" id="PS50111">
    <property type="entry name" value="CHEMOTAXIS_TRANSDUC_2"/>
    <property type="match status" value="1"/>
</dbReference>
<dbReference type="PROSITE" id="PS50885">
    <property type="entry name" value="HAMP"/>
    <property type="match status" value="1"/>
</dbReference>
<gene>
    <name type="ordered locus">BT9727_0469</name>
</gene>
<feature type="chain" id="PRO_0000394197" description="Probable methyl-accepting chemotaxis protein BT9727_0469">
    <location>
        <begin position="1"/>
        <end position="658"/>
    </location>
</feature>
<feature type="topological domain" description="Cytoplasmic" evidence="2">
    <location>
        <begin position="1"/>
        <end position="14"/>
    </location>
</feature>
<feature type="transmembrane region" description="Helical" evidence="2">
    <location>
        <begin position="15"/>
        <end position="35"/>
    </location>
</feature>
<feature type="topological domain" description="Extracellular" evidence="2">
    <location>
        <begin position="36"/>
        <end position="283"/>
    </location>
</feature>
<feature type="transmembrane region" description="Helical" evidence="2">
    <location>
        <begin position="284"/>
        <end position="304"/>
    </location>
</feature>
<feature type="topological domain" description="Cytoplasmic" evidence="2">
    <location>
        <begin position="305"/>
        <end position="658"/>
    </location>
</feature>
<feature type="domain" description="Cache">
    <location>
        <begin position="150"/>
        <end position="221"/>
    </location>
</feature>
<feature type="domain" description="HAMP" evidence="3">
    <location>
        <begin position="301"/>
        <end position="353"/>
    </location>
</feature>
<feature type="domain" description="Methyl-accepting transducer" evidence="4">
    <location>
        <begin position="372"/>
        <end position="622"/>
    </location>
</feature>
<feature type="coiled-coil region" evidence="2">
    <location>
        <begin position="44"/>
        <end position="109"/>
    </location>
</feature>
<feature type="modified residue" description="Glutamate methyl ester (Glu)" evidence="1">
    <location>
        <position position="368"/>
    </location>
</feature>
<feature type="modified residue" description="Deamidated glutamine" evidence="1">
    <location>
        <position position="592"/>
    </location>
</feature>
<feature type="modified residue" description="Glutamate methyl ester (Gln)" evidence="1">
    <location>
        <position position="592"/>
    </location>
</feature>
<feature type="modified residue" description="Glutamate methyl ester (Glu)" evidence="1">
    <location>
        <position position="627"/>
    </location>
</feature>
<feature type="modified residue" description="Glutamate methyl ester (Glu)" evidence="1">
    <location>
        <position position="634"/>
    </location>
</feature>
<keyword id="KW-1003">Cell membrane</keyword>
<keyword id="KW-0145">Chemotaxis</keyword>
<keyword id="KW-0175">Coiled coil</keyword>
<keyword id="KW-0472">Membrane</keyword>
<keyword id="KW-0488">Methylation</keyword>
<keyword id="KW-0807">Transducer</keyword>
<keyword id="KW-0812">Transmembrane</keyword>
<keyword id="KW-1133">Transmembrane helix</keyword>
<evidence type="ECO:0000250" key="1"/>
<evidence type="ECO:0000255" key="2"/>
<evidence type="ECO:0000255" key="3">
    <source>
        <dbReference type="PROSITE-ProRule" id="PRU00102"/>
    </source>
</evidence>
<evidence type="ECO:0000255" key="4">
    <source>
        <dbReference type="PROSITE-ProRule" id="PRU00284"/>
    </source>
</evidence>
<evidence type="ECO:0000305" key="5"/>
<accession>Q6HNQ4</accession>
<name>Y469_BACHK</name>
<comment type="function">
    <text evidence="1">Chemotactic-signal transducers respond to changes in the concentration of attractants and repellents in the environment, transduce a signal from the outside to the inside of the cell, and facilitate sensory adaptation through the variation of the level of methylation.</text>
</comment>
<comment type="subcellular location">
    <subcellularLocation>
        <location evidence="5">Cell membrane</location>
        <topology evidence="5">Multi-pass membrane protein</topology>
    </subcellularLocation>
</comment>
<comment type="similarity">
    <text evidence="5">Belongs to the methyl-accepting chemotaxis (MCP) protein family.</text>
</comment>
<reference key="1">
    <citation type="journal article" date="2006" name="J. Bacteriol.">
        <title>Pathogenomic sequence analysis of Bacillus cereus and Bacillus thuringiensis isolates closely related to Bacillus anthracis.</title>
        <authorList>
            <person name="Han C.S."/>
            <person name="Xie G."/>
            <person name="Challacombe J.F."/>
            <person name="Altherr M.R."/>
            <person name="Bhotika S.S."/>
            <person name="Bruce D."/>
            <person name="Campbell C.S."/>
            <person name="Campbell M.L."/>
            <person name="Chen J."/>
            <person name="Chertkov O."/>
            <person name="Cleland C."/>
            <person name="Dimitrijevic M."/>
            <person name="Doggett N.A."/>
            <person name="Fawcett J.J."/>
            <person name="Glavina T."/>
            <person name="Goodwin L.A."/>
            <person name="Hill K.K."/>
            <person name="Hitchcock P."/>
            <person name="Jackson P.J."/>
            <person name="Keim P."/>
            <person name="Kewalramani A.R."/>
            <person name="Longmire J."/>
            <person name="Lucas S."/>
            <person name="Malfatti S."/>
            <person name="McMurry K."/>
            <person name="Meincke L.J."/>
            <person name="Misra M."/>
            <person name="Moseman B.L."/>
            <person name="Mundt M."/>
            <person name="Munk A.C."/>
            <person name="Okinaka R.T."/>
            <person name="Parson-Quintana B."/>
            <person name="Reilly L.P."/>
            <person name="Richardson P."/>
            <person name="Robinson D.L."/>
            <person name="Rubin E."/>
            <person name="Saunders E."/>
            <person name="Tapia R."/>
            <person name="Tesmer J.G."/>
            <person name="Thayer N."/>
            <person name="Thompson L.S."/>
            <person name="Tice H."/>
            <person name="Ticknor L.O."/>
            <person name="Wills P.L."/>
            <person name="Brettin T.S."/>
            <person name="Gilna P."/>
        </authorList>
    </citation>
    <scope>NUCLEOTIDE SEQUENCE [LARGE SCALE GENOMIC DNA]</scope>
    <source>
        <strain>97-27</strain>
    </source>
</reference>
<sequence length="658" mass="71649">MLQGKLRRSSLKAKLLVSFVIVLILPSIVIGWTSYQQAKTNFNETILQSAEDNVKILNNVINKEIDSKKVDAVYFTKLFNGVSYGTDQLQNVQNKLEEYNKLHPEIEAIYTGSSTGQFIQSPSIQMPDGYNPTERDWYKEAAKKSGEVVITAPYKSSTTGNIVITIAKQNEDKSGVLGIDLIINDIVNTSKMVNIGKTGFVAIFDQSKHVIAHPTMKPGDKIEEKVEKELYKQETGDFKFKLDGDDRNITFITNKQTGWKIAGIMPSKEIIEAANPIFYKTLTVIGISLIIGGVLIYFIIASIISPLKQLVISSKKISEGDLTETITVHSKDEIGQLGESFNEMAASLHHVISNINTSASHVAASSEELTASMKQTSEATEQITQAIEQVSSGAEIQTKEVEEGATLLEGVTEGIQRVADSSSLVSTASMYTKKKAEDGGKLVEQTVNQMQLIHESVSQSDKVIVLLDDKSKQIGAILEVIQHIAEQTNLLALNAAIEAARAGEQGRGFAIVADEVRKLAEQSGQSSTEIGKLVKEIQFDIKETVSSMKQVGTEVQSGLVVANETKQSFAEILKSTDDTVVQIDNMVDVAKQMTVDARQVSASINEIAATIEENAASVQNIAGSSEEQLASVDEINAAAVHLSQMAEELQEMIGKFKV</sequence>
<protein>
    <recommendedName>
        <fullName>Probable methyl-accepting chemotaxis protein BT9727_0469</fullName>
    </recommendedName>
</protein>